<protein>
    <recommendedName>
        <fullName evidence="1">Small ribosomal subunit protein uS5</fullName>
    </recommendedName>
    <alternativeName>
        <fullName evidence="3">30S ribosomal protein S5</fullName>
    </alternativeName>
</protein>
<accession>B4R8N4</accession>
<organism>
    <name type="scientific">Phenylobacterium zucineum (strain HLK1)</name>
    <dbReference type="NCBI Taxonomy" id="450851"/>
    <lineage>
        <taxon>Bacteria</taxon>
        <taxon>Pseudomonadati</taxon>
        <taxon>Pseudomonadota</taxon>
        <taxon>Alphaproteobacteria</taxon>
        <taxon>Caulobacterales</taxon>
        <taxon>Caulobacteraceae</taxon>
        <taxon>Phenylobacterium</taxon>
    </lineage>
</organism>
<comment type="function">
    <text evidence="1">With S4 and S12 plays an important role in translational accuracy.</text>
</comment>
<comment type="function">
    <text evidence="1">Located at the back of the 30S subunit body where it stabilizes the conformation of the head with respect to the body.</text>
</comment>
<comment type="subunit">
    <text evidence="1">Part of the 30S ribosomal subunit. Contacts proteins S4 and S8.</text>
</comment>
<comment type="domain">
    <text>The N-terminal domain interacts with the head of the 30S subunit; the C-terminal domain interacts with the body and contacts protein S4. The interaction surface between S4 and S5 is involved in control of translational fidelity.</text>
</comment>
<comment type="similarity">
    <text evidence="1">Belongs to the universal ribosomal protein uS5 family.</text>
</comment>
<reference key="1">
    <citation type="journal article" date="2008" name="BMC Genomics">
        <title>Complete genome of Phenylobacterium zucineum - a novel facultative intracellular bacterium isolated from human erythroleukemia cell line K562.</title>
        <authorList>
            <person name="Luo Y."/>
            <person name="Xu X."/>
            <person name="Ding Z."/>
            <person name="Liu Z."/>
            <person name="Zhang B."/>
            <person name="Yan Z."/>
            <person name="Sun J."/>
            <person name="Hu S."/>
            <person name="Hu X."/>
        </authorList>
    </citation>
    <scope>NUCLEOTIDE SEQUENCE [LARGE SCALE GENOMIC DNA]</scope>
    <source>
        <strain>HLK1</strain>
    </source>
</reference>
<sequence>MARRNEERGDRRNREEERDSEIVEKLVHINRVAATVKGGRRFSFAALMVVGDQKGRVGFGHGKAREVPEAIRKATEEAKKSMIRVPLRESRTLHHDGAGRWGAGKVMVRAAPPGTGVIAGGPMRAVLETLGVQDVVGKSVGSSNPYNMVRATFEALKAQSSPRQVAAKRGKKVSDVIGRRADGASAAQPAADAEG</sequence>
<gene>
    <name evidence="1" type="primary">rpsE</name>
    <name type="ordered locus">PHZ_c1247</name>
</gene>
<feature type="chain" id="PRO_1000140879" description="Small ribosomal subunit protein uS5">
    <location>
        <begin position="1"/>
        <end position="195"/>
    </location>
</feature>
<feature type="domain" description="S5 DRBM" evidence="1">
    <location>
        <begin position="22"/>
        <end position="85"/>
    </location>
</feature>
<feature type="region of interest" description="Disordered" evidence="2">
    <location>
        <begin position="164"/>
        <end position="195"/>
    </location>
</feature>
<feature type="compositionally biased region" description="Basic and acidic residues" evidence="2">
    <location>
        <begin position="172"/>
        <end position="182"/>
    </location>
</feature>
<feature type="compositionally biased region" description="Low complexity" evidence="2">
    <location>
        <begin position="183"/>
        <end position="195"/>
    </location>
</feature>
<name>RS5_PHEZH</name>
<evidence type="ECO:0000255" key="1">
    <source>
        <dbReference type="HAMAP-Rule" id="MF_01307"/>
    </source>
</evidence>
<evidence type="ECO:0000256" key="2">
    <source>
        <dbReference type="SAM" id="MobiDB-lite"/>
    </source>
</evidence>
<evidence type="ECO:0000305" key="3"/>
<proteinExistence type="inferred from homology"/>
<dbReference type="EMBL" id="CP000747">
    <property type="protein sequence ID" value="ACG77661.1"/>
    <property type="molecule type" value="Genomic_DNA"/>
</dbReference>
<dbReference type="RefSeq" id="WP_012521805.1">
    <property type="nucleotide sequence ID" value="NC_011144.1"/>
</dbReference>
<dbReference type="SMR" id="B4R8N4"/>
<dbReference type="STRING" id="450851.PHZ_c1247"/>
<dbReference type="KEGG" id="pzu:PHZ_c1247"/>
<dbReference type="eggNOG" id="COG0098">
    <property type="taxonomic scope" value="Bacteria"/>
</dbReference>
<dbReference type="HOGENOM" id="CLU_065898_2_2_5"/>
<dbReference type="OrthoDB" id="9809045at2"/>
<dbReference type="Proteomes" id="UP000001868">
    <property type="component" value="Chromosome"/>
</dbReference>
<dbReference type="GO" id="GO:0015935">
    <property type="term" value="C:small ribosomal subunit"/>
    <property type="evidence" value="ECO:0007669"/>
    <property type="project" value="InterPro"/>
</dbReference>
<dbReference type="GO" id="GO:0019843">
    <property type="term" value="F:rRNA binding"/>
    <property type="evidence" value="ECO:0007669"/>
    <property type="project" value="UniProtKB-UniRule"/>
</dbReference>
<dbReference type="GO" id="GO:0003735">
    <property type="term" value="F:structural constituent of ribosome"/>
    <property type="evidence" value="ECO:0007669"/>
    <property type="project" value="InterPro"/>
</dbReference>
<dbReference type="GO" id="GO:0006412">
    <property type="term" value="P:translation"/>
    <property type="evidence" value="ECO:0007669"/>
    <property type="project" value="UniProtKB-UniRule"/>
</dbReference>
<dbReference type="FunFam" id="3.30.160.20:FF:000001">
    <property type="entry name" value="30S ribosomal protein S5"/>
    <property type="match status" value="1"/>
</dbReference>
<dbReference type="FunFam" id="3.30.230.10:FF:000002">
    <property type="entry name" value="30S ribosomal protein S5"/>
    <property type="match status" value="1"/>
</dbReference>
<dbReference type="Gene3D" id="3.30.160.20">
    <property type="match status" value="1"/>
</dbReference>
<dbReference type="Gene3D" id="3.30.230.10">
    <property type="match status" value="1"/>
</dbReference>
<dbReference type="HAMAP" id="MF_01307_B">
    <property type="entry name" value="Ribosomal_uS5_B"/>
    <property type="match status" value="1"/>
</dbReference>
<dbReference type="InterPro" id="IPR020568">
    <property type="entry name" value="Ribosomal_Su5_D2-typ_SF"/>
</dbReference>
<dbReference type="InterPro" id="IPR000851">
    <property type="entry name" value="Ribosomal_uS5"/>
</dbReference>
<dbReference type="InterPro" id="IPR005712">
    <property type="entry name" value="Ribosomal_uS5_bac-type"/>
</dbReference>
<dbReference type="InterPro" id="IPR005324">
    <property type="entry name" value="Ribosomal_uS5_C"/>
</dbReference>
<dbReference type="InterPro" id="IPR013810">
    <property type="entry name" value="Ribosomal_uS5_N"/>
</dbReference>
<dbReference type="InterPro" id="IPR018192">
    <property type="entry name" value="Ribosomal_uS5_N_CS"/>
</dbReference>
<dbReference type="InterPro" id="IPR014721">
    <property type="entry name" value="Ribsml_uS5_D2-typ_fold_subgr"/>
</dbReference>
<dbReference type="NCBIfam" id="TIGR01021">
    <property type="entry name" value="rpsE_bact"/>
    <property type="match status" value="1"/>
</dbReference>
<dbReference type="PANTHER" id="PTHR48277">
    <property type="entry name" value="MITOCHONDRIAL RIBOSOMAL PROTEIN S5"/>
    <property type="match status" value="1"/>
</dbReference>
<dbReference type="PANTHER" id="PTHR48277:SF1">
    <property type="entry name" value="MITOCHONDRIAL RIBOSOMAL PROTEIN S5"/>
    <property type="match status" value="1"/>
</dbReference>
<dbReference type="Pfam" id="PF00333">
    <property type="entry name" value="Ribosomal_S5"/>
    <property type="match status" value="1"/>
</dbReference>
<dbReference type="Pfam" id="PF03719">
    <property type="entry name" value="Ribosomal_S5_C"/>
    <property type="match status" value="1"/>
</dbReference>
<dbReference type="SUPFAM" id="SSF54768">
    <property type="entry name" value="dsRNA-binding domain-like"/>
    <property type="match status" value="1"/>
</dbReference>
<dbReference type="SUPFAM" id="SSF54211">
    <property type="entry name" value="Ribosomal protein S5 domain 2-like"/>
    <property type="match status" value="1"/>
</dbReference>
<dbReference type="PROSITE" id="PS00585">
    <property type="entry name" value="RIBOSOMAL_S5"/>
    <property type="match status" value="1"/>
</dbReference>
<dbReference type="PROSITE" id="PS50881">
    <property type="entry name" value="S5_DSRBD"/>
    <property type="match status" value="1"/>
</dbReference>
<keyword id="KW-1185">Reference proteome</keyword>
<keyword id="KW-0687">Ribonucleoprotein</keyword>
<keyword id="KW-0689">Ribosomal protein</keyword>
<keyword id="KW-0694">RNA-binding</keyword>
<keyword id="KW-0699">rRNA-binding</keyword>